<gene>
    <name evidence="10" type="primary">SLC35A5</name>
    <name evidence="9" type="ORF">UNQ164/PRO190</name>
</gene>
<name>S35A5_HUMAN</name>
<dbReference type="EMBL" id="AY358994">
    <property type="protein sequence ID" value="AAQ89353.1"/>
    <property type="molecule type" value="mRNA"/>
</dbReference>
<dbReference type="EMBL" id="AK000737">
    <property type="protein sequence ID" value="BAA91350.1"/>
    <property type="molecule type" value="mRNA"/>
</dbReference>
<dbReference type="EMBL" id="AK172825">
    <property type="protein sequence ID" value="BAD18792.1"/>
    <property type="status" value="ALT_INIT"/>
    <property type="molecule type" value="mRNA"/>
</dbReference>
<dbReference type="EMBL" id="CH471052">
    <property type="protein sequence ID" value="EAW79666.1"/>
    <property type="molecule type" value="Genomic_DNA"/>
</dbReference>
<dbReference type="EMBL" id="CH471052">
    <property type="protein sequence ID" value="EAW79667.1"/>
    <property type="molecule type" value="Genomic_DNA"/>
</dbReference>
<dbReference type="EMBL" id="BC005207">
    <property type="protein sequence ID" value="AAH05207.1"/>
    <property type="molecule type" value="mRNA"/>
</dbReference>
<dbReference type="EMBL" id="BC010307">
    <property type="protein sequence ID" value="AAH10307.1"/>
    <property type="molecule type" value="mRNA"/>
</dbReference>
<dbReference type="EMBL" id="BC013046">
    <property type="protein sequence ID" value="AAH13046.1"/>
    <property type="molecule type" value="mRNA"/>
</dbReference>
<dbReference type="EMBL" id="AL117531">
    <property type="protein sequence ID" value="CAH10717.1"/>
    <property type="molecule type" value="mRNA"/>
</dbReference>
<dbReference type="CCDS" id="CCDS2967.1"/>
<dbReference type="RefSeq" id="NP_001335834.1">
    <property type="nucleotide sequence ID" value="NM_001348905.2"/>
</dbReference>
<dbReference type="RefSeq" id="NP_001335835.1">
    <property type="nucleotide sequence ID" value="NM_001348906.2"/>
</dbReference>
<dbReference type="RefSeq" id="NP_001335836.1">
    <property type="nucleotide sequence ID" value="NM_001348907.2"/>
</dbReference>
<dbReference type="RefSeq" id="NP_060415.1">
    <property type="nucleotide sequence ID" value="NM_017945.5"/>
</dbReference>
<dbReference type="RefSeq" id="XP_011511250.1">
    <property type="nucleotide sequence ID" value="XM_011512948.1"/>
</dbReference>
<dbReference type="SMR" id="Q9BS91"/>
<dbReference type="BioGRID" id="120361">
    <property type="interactions" value="19"/>
</dbReference>
<dbReference type="FunCoup" id="Q9BS91">
    <property type="interactions" value="1276"/>
</dbReference>
<dbReference type="IntAct" id="Q9BS91">
    <property type="interactions" value="15"/>
</dbReference>
<dbReference type="MINT" id="Q9BS91"/>
<dbReference type="STRING" id="9606.ENSP00000417654"/>
<dbReference type="TCDB" id="2.A.7.12.14">
    <property type="family name" value="the drug/metabolite transporter (dmt) superfamily"/>
</dbReference>
<dbReference type="GlyCosmos" id="Q9BS91">
    <property type="glycosylation" value="1 site, No reported glycans"/>
</dbReference>
<dbReference type="GlyGen" id="Q9BS91">
    <property type="glycosylation" value="3 sites, 1 O-linked glycan (1 site)"/>
</dbReference>
<dbReference type="iPTMnet" id="Q9BS91"/>
<dbReference type="PhosphoSitePlus" id="Q9BS91"/>
<dbReference type="SwissPalm" id="Q9BS91"/>
<dbReference type="BioMuta" id="SLC35A5"/>
<dbReference type="DMDM" id="160358743"/>
<dbReference type="jPOST" id="Q9BS91"/>
<dbReference type="MassIVE" id="Q9BS91"/>
<dbReference type="PaxDb" id="9606-ENSP00000417654"/>
<dbReference type="PeptideAtlas" id="Q9BS91"/>
<dbReference type="ProteomicsDB" id="78867"/>
<dbReference type="Antibodypedia" id="32514">
    <property type="antibodies" value="38 antibodies from 13 providers"/>
</dbReference>
<dbReference type="DNASU" id="55032"/>
<dbReference type="Ensembl" id="ENST00000492406.6">
    <property type="protein sequence ID" value="ENSP00000417654.1"/>
    <property type="gene ID" value="ENSG00000138459.9"/>
</dbReference>
<dbReference type="GeneID" id="55032"/>
<dbReference type="KEGG" id="hsa:55032"/>
<dbReference type="MANE-Select" id="ENST00000492406.6">
    <property type="protein sequence ID" value="ENSP00000417654.1"/>
    <property type="RefSeq nucleotide sequence ID" value="NM_017945.5"/>
    <property type="RefSeq protein sequence ID" value="NP_060415.1"/>
</dbReference>
<dbReference type="UCSC" id="uc003dze.5">
    <property type="organism name" value="human"/>
</dbReference>
<dbReference type="AGR" id="HGNC:20792"/>
<dbReference type="CTD" id="55032"/>
<dbReference type="DisGeNET" id="55032"/>
<dbReference type="GeneCards" id="SLC35A5"/>
<dbReference type="HGNC" id="HGNC:20792">
    <property type="gene designation" value="SLC35A5"/>
</dbReference>
<dbReference type="HPA" id="ENSG00000138459">
    <property type="expression patterns" value="Low tissue specificity"/>
</dbReference>
<dbReference type="MIM" id="620298">
    <property type="type" value="gene"/>
</dbReference>
<dbReference type="neXtProt" id="NX_Q9BS91"/>
<dbReference type="OpenTargets" id="ENSG00000138459"/>
<dbReference type="PharmGKB" id="PA134947136"/>
<dbReference type="VEuPathDB" id="HostDB:ENSG00000138459"/>
<dbReference type="eggNOG" id="KOG2234">
    <property type="taxonomic scope" value="Eukaryota"/>
</dbReference>
<dbReference type="GeneTree" id="ENSGT00950000182827"/>
<dbReference type="HOGENOM" id="CLU_044353_0_0_1"/>
<dbReference type="InParanoid" id="Q9BS91"/>
<dbReference type="OMA" id="SCLKWAV"/>
<dbReference type="OrthoDB" id="408493at2759"/>
<dbReference type="PAN-GO" id="Q9BS91">
    <property type="GO annotations" value="1 GO annotation based on evolutionary models"/>
</dbReference>
<dbReference type="PhylomeDB" id="Q9BS91"/>
<dbReference type="TreeFam" id="TF354304"/>
<dbReference type="PathwayCommons" id="Q9BS91"/>
<dbReference type="SignaLink" id="Q9BS91"/>
<dbReference type="BioGRID-ORCS" id="55032">
    <property type="hits" value="19 hits in 1158 CRISPR screens"/>
</dbReference>
<dbReference type="ChiTaRS" id="SLC35A5">
    <property type="organism name" value="human"/>
</dbReference>
<dbReference type="GenomeRNAi" id="55032"/>
<dbReference type="Pharos" id="Q9BS91">
    <property type="development level" value="Tdark"/>
</dbReference>
<dbReference type="PRO" id="PR:Q9BS91"/>
<dbReference type="Proteomes" id="UP000005640">
    <property type="component" value="Chromosome 3"/>
</dbReference>
<dbReference type="RNAct" id="Q9BS91">
    <property type="molecule type" value="protein"/>
</dbReference>
<dbReference type="Bgee" id="ENSG00000138459">
    <property type="expression patterns" value="Expressed in primordial germ cell in gonad and 197 other cell types or tissues"/>
</dbReference>
<dbReference type="ExpressionAtlas" id="Q9BS91">
    <property type="expression patterns" value="baseline and differential"/>
</dbReference>
<dbReference type="GO" id="GO:0000139">
    <property type="term" value="C:Golgi membrane"/>
    <property type="evidence" value="ECO:0000314"/>
    <property type="project" value="UniProtKB"/>
</dbReference>
<dbReference type="GO" id="GO:0015297">
    <property type="term" value="F:antiporter activity"/>
    <property type="evidence" value="ECO:0007669"/>
    <property type="project" value="UniProtKB-KW"/>
</dbReference>
<dbReference type="GO" id="GO:0015165">
    <property type="term" value="F:pyrimidine nucleotide-sugar transmembrane transporter activity"/>
    <property type="evidence" value="ECO:0000315"/>
    <property type="project" value="UniProtKB"/>
</dbReference>
<dbReference type="GO" id="GO:0022857">
    <property type="term" value="F:transmembrane transporter activity"/>
    <property type="evidence" value="ECO:0000318"/>
    <property type="project" value="GO_Central"/>
</dbReference>
<dbReference type="GO" id="GO:0055085">
    <property type="term" value="P:transmembrane transport"/>
    <property type="evidence" value="ECO:0000318"/>
    <property type="project" value="GO_Central"/>
</dbReference>
<dbReference type="InterPro" id="IPR007271">
    <property type="entry name" value="Nuc_sug_transpt"/>
</dbReference>
<dbReference type="NCBIfam" id="TIGR00803">
    <property type="entry name" value="nst"/>
    <property type="match status" value="1"/>
</dbReference>
<dbReference type="PANTHER" id="PTHR10231">
    <property type="entry name" value="NUCLEOTIDE-SUGAR TRANSMEMBRANE TRANSPORTER"/>
    <property type="match status" value="1"/>
</dbReference>
<dbReference type="Pfam" id="PF04142">
    <property type="entry name" value="Nuc_sug_transp"/>
    <property type="match status" value="1"/>
</dbReference>
<dbReference type="PIRSF" id="PIRSF005799">
    <property type="entry name" value="UDP-gal_transpt"/>
    <property type="match status" value="1"/>
</dbReference>
<dbReference type="SUPFAM" id="SSF103481">
    <property type="entry name" value="Multidrug resistance efflux transporter EmrE"/>
    <property type="match status" value="1"/>
</dbReference>
<keyword id="KW-0050">Antiport</keyword>
<keyword id="KW-0325">Glycoprotein</keyword>
<keyword id="KW-0333">Golgi apparatus</keyword>
<keyword id="KW-0472">Membrane</keyword>
<keyword id="KW-0597">Phosphoprotein</keyword>
<keyword id="KW-1267">Proteomics identification</keyword>
<keyword id="KW-1185">Reference proteome</keyword>
<keyword id="KW-0762">Sugar transport</keyword>
<keyword id="KW-0812">Transmembrane</keyword>
<keyword id="KW-1133">Transmembrane helix</keyword>
<keyword id="KW-0813">Transport</keyword>
<evidence type="ECO:0000255" key="1"/>
<evidence type="ECO:0000256" key="2">
    <source>
        <dbReference type="SAM" id="MobiDB-lite"/>
    </source>
</evidence>
<evidence type="ECO:0000269" key="3">
    <source>
    </source>
</evidence>
<evidence type="ECO:0000269" key="4">
    <source>
    </source>
</evidence>
<evidence type="ECO:0000269" key="5">
    <source>
    </source>
</evidence>
<evidence type="ECO:0000305" key="6"/>
<evidence type="ECO:0000305" key="7">
    <source>
    </source>
</evidence>
<evidence type="ECO:0000305" key="8">
    <source>
    </source>
</evidence>
<evidence type="ECO:0000312" key="9">
    <source>
        <dbReference type="EMBL" id="AAQ89353.1"/>
    </source>
</evidence>
<evidence type="ECO:0000312" key="10">
    <source>
        <dbReference type="HGNC" id="HGNC:20792"/>
    </source>
</evidence>
<evidence type="ECO:0007744" key="11">
    <source>
    </source>
</evidence>
<evidence type="ECO:0007744" key="12">
    <source>
    </source>
</evidence>
<evidence type="ECO:0007744" key="13">
    <source>
    </source>
</evidence>
<organism>
    <name type="scientific">Homo sapiens</name>
    <name type="common">Human</name>
    <dbReference type="NCBI Taxonomy" id="9606"/>
    <lineage>
        <taxon>Eukaryota</taxon>
        <taxon>Metazoa</taxon>
        <taxon>Chordata</taxon>
        <taxon>Craniata</taxon>
        <taxon>Vertebrata</taxon>
        <taxon>Euteleostomi</taxon>
        <taxon>Mammalia</taxon>
        <taxon>Eutheria</taxon>
        <taxon>Euarchontoglires</taxon>
        <taxon>Primates</taxon>
        <taxon>Haplorrhini</taxon>
        <taxon>Catarrhini</taxon>
        <taxon>Hominidae</taxon>
        <taxon>Homo</taxon>
    </lineage>
</organism>
<feature type="chain" id="PRO_0000309355" description="UDP-sugar transporter protein SLC35A5">
    <location>
        <begin position="1"/>
        <end position="424"/>
    </location>
</feature>
<feature type="topological domain" description="Cytoplasmic" evidence="5">
    <location>
        <begin position="1"/>
        <end position="8"/>
    </location>
</feature>
<feature type="transmembrane region" description="Helical" evidence="1">
    <location>
        <begin position="9"/>
        <end position="29"/>
    </location>
</feature>
<feature type="topological domain" description="Lumenal" evidence="5">
    <location>
        <begin position="30"/>
        <end position="53"/>
    </location>
</feature>
<feature type="transmembrane region" description="Helical" evidence="1">
    <location>
        <begin position="54"/>
        <end position="74"/>
    </location>
</feature>
<feature type="topological domain" description="Cytoplasmic" evidence="5">
    <location>
        <begin position="75"/>
        <end position="93"/>
    </location>
</feature>
<feature type="transmembrane region" description="Helical" evidence="1">
    <location>
        <begin position="94"/>
        <end position="116"/>
    </location>
</feature>
<feature type="topological domain" description="Lumenal" evidence="5">
    <location>
        <begin position="117"/>
        <end position="119"/>
    </location>
</feature>
<feature type="transmembrane region" description="Helical" evidence="1">
    <location>
        <begin position="120"/>
        <end position="142"/>
    </location>
</feature>
<feature type="topological domain" description="Cytoplasmic" evidence="5">
    <location>
        <begin position="143"/>
        <end position="147"/>
    </location>
</feature>
<feature type="transmembrane region" description="Helical" evidence="1">
    <location>
        <begin position="148"/>
        <end position="168"/>
    </location>
</feature>
<feature type="topological domain" description="Lumenal" evidence="5">
    <location>
        <begin position="169"/>
        <end position="228"/>
    </location>
</feature>
<feature type="transmembrane region" description="Helical" evidence="1">
    <location>
        <begin position="229"/>
        <end position="249"/>
    </location>
</feature>
<feature type="topological domain" description="Cytoplasmic" evidence="5">
    <location>
        <begin position="250"/>
        <end position="263"/>
    </location>
</feature>
<feature type="transmembrane region" description="Helical" evidence="1">
    <location>
        <begin position="264"/>
        <end position="284"/>
    </location>
</feature>
<feature type="topological domain" description="Lumenal" evidence="5">
    <location>
        <begin position="285"/>
        <end position="303"/>
    </location>
</feature>
<feature type="transmembrane region" description="Helical" evidence="1">
    <location>
        <begin position="304"/>
        <end position="324"/>
    </location>
</feature>
<feature type="topological domain" description="Cytoplasmic" evidence="5">
    <location>
        <begin position="325"/>
        <end position="330"/>
    </location>
</feature>
<feature type="transmembrane region" description="Helical" evidence="1">
    <location>
        <begin position="331"/>
        <end position="351"/>
    </location>
</feature>
<feature type="topological domain" description="Lumenal" evidence="5">
    <location>
        <begin position="352"/>
        <end position="354"/>
    </location>
</feature>
<feature type="transmembrane region" description="Helical" evidence="1">
    <location>
        <begin position="355"/>
        <end position="375"/>
    </location>
</feature>
<feature type="topological domain" description="Cytoplasmic" evidence="5">
    <location>
        <begin position="376"/>
        <end position="424"/>
    </location>
</feature>
<feature type="region of interest" description="Disordered" evidence="2">
    <location>
        <begin position="397"/>
        <end position="424"/>
    </location>
</feature>
<feature type="compositionally biased region" description="Basic and acidic residues" evidence="2">
    <location>
        <begin position="408"/>
        <end position="417"/>
    </location>
</feature>
<feature type="modified residue" description="Phosphoserine" evidence="12 13">
    <location>
        <position position="394"/>
    </location>
</feature>
<feature type="modified residue" description="Phosphoserine" evidence="11">
    <location>
        <position position="416"/>
    </location>
</feature>
<feature type="modified residue" description="Phosphoserine" evidence="11">
    <location>
        <position position="419"/>
    </location>
</feature>
<feature type="glycosylation site" description="N-linked (GlcNAc...) asparagine" evidence="1">
    <location>
        <position position="204"/>
    </location>
</feature>
<feature type="sequence variant" id="VAR_036945" description="In dbSNP:rs17849939." evidence="3">
    <original>N</original>
    <variation>I</variation>
    <location>
        <position position="247"/>
    </location>
</feature>
<protein>
    <recommendedName>
        <fullName evidence="8">UDP-sugar transporter protein SLC35A5</fullName>
    </recommendedName>
    <alternativeName>
        <fullName evidence="10">Solute carrier family 35 member A5</fullName>
    </alternativeName>
</protein>
<proteinExistence type="evidence at protein level"/>
<sequence>MEKQCCSHPVICSLSTMYTFLLGAIFIALSSSRILLVKYSANEENKYDYLPTTVNVCSELVKLVFCVLVSFCVIKKDHQSRNLKYASWKEFSDFMKWSIPAFLYFLDNLIVFYVLSYLQPAMAVIFSNFSIITTALLFRIVLKRRLNWIQWASLLTLFLSIVALTAGTKTLQHNLAGRGFHHDAFFSPSNSCLLFRSECPRKDNCTAKEWTFPEAKWNTTARVFSHIRLGMGHVLIIVQCFISSMANIYNEKILKEGNQLTESIFIQNSKLYFFGILFNGLTLGLQRSNRDQIKNCGFFYGHSAFSVALIFVTAFQGLSVAFILKFLDNMFHVLMAQVTTVIITTVSVLVFDFRPSLEFFLEAPSVLLSIFIYNASKPQVPEYAPRQERIRDLSGNLWERSSGDGEELERLTKPKSDESDEDTF</sequence>
<comment type="function">
    <text evidence="4 5">Probable UDP-sugar:UMP transmembrane antiporter involved in UDP-alpha-D-glucuronate/UDP-GlcA, UDP-GlcNAc/UDP-N-acetyl-alpha-D-glucosamine and UDP-N-acetyl-alpha-D-galactosamine/UDP-GalNAc transport from the cytosol to the lumen of the Golgi.</text>
</comment>
<comment type="catalytic activity">
    <reaction evidence="7 8">
        <text>UMP(out) + UDP-alpha-D-glucuronate(in) = UMP(in) + UDP-alpha-D-glucuronate(out)</text>
        <dbReference type="Rhea" id="RHEA:72727"/>
        <dbReference type="ChEBI" id="CHEBI:57865"/>
        <dbReference type="ChEBI" id="CHEBI:58052"/>
    </reaction>
</comment>
<comment type="catalytic activity">
    <reaction evidence="7 8">
        <text>UMP(out) + UDP-N-acetyl-alpha-D-glucosamine(in) = UMP(in) + UDP-N-acetyl-alpha-D-glucosamine(out)</text>
        <dbReference type="Rhea" id="RHEA:72695"/>
        <dbReference type="ChEBI" id="CHEBI:57705"/>
        <dbReference type="ChEBI" id="CHEBI:57865"/>
    </reaction>
</comment>
<comment type="catalytic activity">
    <reaction evidence="7 8">
        <text>UDP-N-acetyl-alpha-D-galactosamine(in) + UMP(out) = UDP-N-acetyl-alpha-D-galactosamine(out) + UMP(in)</text>
        <dbReference type="Rhea" id="RHEA:72735"/>
        <dbReference type="ChEBI" id="CHEBI:57865"/>
        <dbReference type="ChEBI" id="CHEBI:67138"/>
    </reaction>
</comment>
<comment type="subunit">
    <text evidence="5">Probably forms homooligomers and heterooligomers with SLC35A1, SLC35A2, SLC35A3 and SLC35A4.</text>
</comment>
<comment type="interaction">
    <interactant intactId="EBI-18915901">
        <id>Q9BS91</id>
    </interactant>
    <interactant intactId="EBI-724839">
        <id>Q14318</id>
        <label>FKBP8</label>
    </interactant>
    <organismsDiffer>false</organismsDiffer>
    <experiments>3</experiments>
</comment>
<comment type="interaction">
    <interactant intactId="EBI-18915901">
        <id>Q9BS91</id>
    </interactant>
    <interactant intactId="EBI-3917235">
        <id>Q9NTJ5</id>
        <label>SACM1L</label>
    </interactant>
    <organismsDiffer>false</organismsDiffer>
    <experiments>3</experiments>
</comment>
<comment type="interaction">
    <interactant intactId="EBI-18915901">
        <id>Q9BS91</id>
    </interactant>
    <interactant intactId="EBI-8644968">
        <id>Q9NV29</id>
        <label>TMEM100</label>
    </interactant>
    <organismsDiffer>false</organismsDiffer>
    <experiments>3</experiments>
</comment>
<comment type="interaction">
    <interactant intactId="EBI-18915901">
        <id>Q9BS91</id>
    </interactant>
    <interactant intactId="EBI-12878352">
        <id>A0PK05</id>
        <label>TMEM72</label>
    </interactant>
    <organismsDiffer>false</organismsDiffer>
    <experiments>3</experiments>
</comment>
<comment type="subcellular location">
    <subcellularLocation>
        <location evidence="5">Golgi apparatus membrane</location>
        <topology evidence="1">Multi-pass membrane protein</topology>
    </subcellularLocation>
</comment>
<comment type="similarity">
    <text evidence="6">Belongs to the nucleotide-sugar transporter family. SLC35A subfamily.</text>
</comment>
<comment type="sequence caution" evidence="6">
    <conflict type="erroneous initiation">
        <sequence resource="EMBL-CDS" id="BAD18792"/>
    </conflict>
</comment>
<accession>Q9BS91</accession>
<accession>D3DN66</accession>
<accession>Q69YY6</accession>
<accession>Q6ZMD6</accession>
<accession>Q9NWM9</accession>
<reference key="1">
    <citation type="journal article" date="2003" name="Genome Res.">
        <title>The secreted protein discovery initiative (SPDI), a large-scale effort to identify novel human secreted and transmembrane proteins: a bioinformatics assessment.</title>
        <authorList>
            <person name="Clark H.F."/>
            <person name="Gurney A.L."/>
            <person name="Abaya E."/>
            <person name="Baker K."/>
            <person name="Baldwin D.T."/>
            <person name="Brush J."/>
            <person name="Chen J."/>
            <person name="Chow B."/>
            <person name="Chui C."/>
            <person name="Crowley C."/>
            <person name="Currell B."/>
            <person name="Deuel B."/>
            <person name="Dowd P."/>
            <person name="Eaton D."/>
            <person name="Foster J.S."/>
            <person name="Grimaldi C."/>
            <person name="Gu Q."/>
            <person name="Hass P.E."/>
            <person name="Heldens S."/>
            <person name="Huang A."/>
            <person name="Kim H.S."/>
            <person name="Klimowski L."/>
            <person name="Jin Y."/>
            <person name="Johnson S."/>
            <person name="Lee J."/>
            <person name="Lewis L."/>
            <person name="Liao D."/>
            <person name="Mark M.R."/>
            <person name="Robbie E."/>
            <person name="Sanchez C."/>
            <person name="Schoenfeld J."/>
            <person name="Seshagiri S."/>
            <person name="Simmons L."/>
            <person name="Singh J."/>
            <person name="Smith V."/>
            <person name="Stinson J."/>
            <person name="Vagts A."/>
            <person name="Vandlen R.L."/>
            <person name="Watanabe C."/>
            <person name="Wieand D."/>
            <person name="Woods K."/>
            <person name="Xie M.-H."/>
            <person name="Yansura D.G."/>
            <person name="Yi S."/>
            <person name="Yu G."/>
            <person name="Yuan J."/>
            <person name="Zhang M."/>
            <person name="Zhang Z."/>
            <person name="Goddard A.D."/>
            <person name="Wood W.I."/>
            <person name="Godowski P.J."/>
            <person name="Gray A.M."/>
        </authorList>
    </citation>
    <scope>NUCLEOTIDE SEQUENCE [LARGE SCALE MRNA]</scope>
</reference>
<reference key="2">
    <citation type="journal article" date="2004" name="Nat. Genet.">
        <title>Complete sequencing and characterization of 21,243 full-length human cDNAs.</title>
        <authorList>
            <person name="Ota T."/>
            <person name="Suzuki Y."/>
            <person name="Nishikawa T."/>
            <person name="Otsuki T."/>
            <person name="Sugiyama T."/>
            <person name="Irie R."/>
            <person name="Wakamatsu A."/>
            <person name="Hayashi K."/>
            <person name="Sato H."/>
            <person name="Nagai K."/>
            <person name="Kimura K."/>
            <person name="Makita H."/>
            <person name="Sekine M."/>
            <person name="Obayashi M."/>
            <person name="Nishi T."/>
            <person name="Shibahara T."/>
            <person name="Tanaka T."/>
            <person name="Ishii S."/>
            <person name="Yamamoto J."/>
            <person name="Saito K."/>
            <person name="Kawai Y."/>
            <person name="Isono Y."/>
            <person name="Nakamura Y."/>
            <person name="Nagahari K."/>
            <person name="Murakami K."/>
            <person name="Yasuda T."/>
            <person name="Iwayanagi T."/>
            <person name="Wagatsuma M."/>
            <person name="Shiratori A."/>
            <person name="Sudo H."/>
            <person name="Hosoiri T."/>
            <person name="Kaku Y."/>
            <person name="Kodaira H."/>
            <person name="Kondo H."/>
            <person name="Sugawara M."/>
            <person name="Takahashi M."/>
            <person name="Kanda K."/>
            <person name="Yokoi T."/>
            <person name="Furuya T."/>
            <person name="Kikkawa E."/>
            <person name="Omura Y."/>
            <person name="Abe K."/>
            <person name="Kamihara K."/>
            <person name="Katsuta N."/>
            <person name="Sato K."/>
            <person name="Tanikawa M."/>
            <person name="Yamazaki M."/>
            <person name="Ninomiya K."/>
            <person name="Ishibashi T."/>
            <person name="Yamashita H."/>
            <person name="Murakawa K."/>
            <person name="Fujimori K."/>
            <person name="Tanai H."/>
            <person name="Kimata M."/>
            <person name="Watanabe M."/>
            <person name="Hiraoka S."/>
            <person name="Chiba Y."/>
            <person name="Ishida S."/>
            <person name="Ono Y."/>
            <person name="Takiguchi S."/>
            <person name="Watanabe S."/>
            <person name="Yosida M."/>
            <person name="Hotuta T."/>
            <person name="Kusano J."/>
            <person name="Kanehori K."/>
            <person name="Takahashi-Fujii A."/>
            <person name="Hara H."/>
            <person name="Tanase T.-O."/>
            <person name="Nomura Y."/>
            <person name="Togiya S."/>
            <person name="Komai F."/>
            <person name="Hara R."/>
            <person name="Takeuchi K."/>
            <person name="Arita M."/>
            <person name="Imose N."/>
            <person name="Musashino K."/>
            <person name="Yuuki H."/>
            <person name="Oshima A."/>
            <person name="Sasaki N."/>
            <person name="Aotsuka S."/>
            <person name="Yoshikawa Y."/>
            <person name="Matsunawa H."/>
            <person name="Ichihara T."/>
            <person name="Shiohata N."/>
            <person name="Sano S."/>
            <person name="Moriya S."/>
            <person name="Momiyama H."/>
            <person name="Satoh N."/>
            <person name="Takami S."/>
            <person name="Terashima Y."/>
            <person name="Suzuki O."/>
            <person name="Nakagawa S."/>
            <person name="Senoh A."/>
            <person name="Mizoguchi H."/>
            <person name="Goto Y."/>
            <person name="Shimizu F."/>
            <person name="Wakebe H."/>
            <person name="Hishigaki H."/>
            <person name="Watanabe T."/>
            <person name="Sugiyama A."/>
            <person name="Takemoto M."/>
            <person name="Kawakami B."/>
            <person name="Yamazaki M."/>
            <person name="Watanabe K."/>
            <person name="Kumagai A."/>
            <person name="Itakura S."/>
            <person name="Fukuzumi Y."/>
            <person name="Fujimori Y."/>
            <person name="Komiyama M."/>
            <person name="Tashiro H."/>
            <person name="Tanigami A."/>
            <person name="Fujiwara T."/>
            <person name="Ono T."/>
            <person name="Yamada K."/>
            <person name="Fujii Y."/>
            <person name="Ozaki K."/>
            <person name="Hirao M."/>
            <person name="Ohmori Y."/>
            <person name="Kawabata A."/>
            <person name="Hikiji T."/>
            <person name="Kobatake N."/>
            <person name="Inagaki H."/>
            <person name="Ikema Y."/>
            <person name="Okamoto S."/>
            <person name="Okitani R."/>
            <person name="Kawakami T."/>
            <person name="Noguchi S."/>
            <person name="Itoh T."/>
            <person name="Shigeta K."/>
            <person name="Senba T."/>
            <person name="Matsumura K."/>
            <person name="Nakajima Y."/>
            <person name="Mizuno T."/>
            <person name="Morinaga M."/>
            <person name="Sasaki M."/>
            <person name="Togashi T."/>
            <person name="Oyama M."/>
            <person name="Hata H."/>
            <person name="Watanabe M."/>
            <person name="Komatsu T."/>
            <person name="Mizushima-Sugano J."/>
            <person name="Satoh T."/>
            <person name="Shirai Y."/>
            <person name="Takahashi Y."/>
            <person name="Nakagawa K."/>
            <person name="Okumura K."/>
            <person name="Nagase T."/>
            <person name="Nomura N."/>
            <person name="Kikuchi H."/>
            <person name="Masuho Y."/>
            <person name="Yamashita R."/>
            <person name="Nakai K."/>
            <person name="Yada T."/>
            <person name="Nakamura Y."/>
            <person name="Ohara O."/>
            <person name="Isogai T."/>
            <person name="Sugano S."/>
        </authorList>
    </citation>
    <scope>NUCLEOTIDE SEQUENCE [LARGE SCALE MRNA]</scope>
</reference>
<reference key="3">
    <citation type="submission" date="2005-09" db="EMBL/GenBank/DDBJ databases">
        <authorList>
            <person name="Mural R.J."/>
            <person name="Istrail S."/>
            <person name="Sutton G.G."/>
            <person name="Florea L."/>
            <person name="Halpern A.L."/>
            <person name="Mobarry C.M."/>
            <person name="Lippert R."/>
            <person name="Walenz B."/>
            <person name="Shatkay H."/>
            <person name="Dew I."/>
            <person name="Miller J.R."/>
            <person name="Flanigan M.J."/>
            <person name="Edwards N.J."/>
            <person name="Bolanos R."/>
            <person name="Fasulo D."/>
            <person name="Halldorsson B.V."/>
            <person name="Hannenhalli S."/>
            <person name="Turner R."/>
            <person name="Yooseph S."/>
            <person name="Lu F."/>
            <person name="Nusskern D.R."/>
            <person name="Shue B.C."/>
            <person name="Zheng X.H."/>
            <person name="Zhong F."/>
            <person name="Delcher A.L."/>
            <person name="Huson D.H."/>
            <person name="Kravitz S.A."/>
            <person name="Mouchard L."/>
            <person name="Reinert K."/>
            <person name="Remington K.A."/>
            <person name="Clark A.G."/>
            <person name="Waterman M.S."/>
            <person name="Eichler E.E."/>
            <person name="Adams M.D."/>
            <person name="Hunkapiller M.W."/>
            <person name="Myers E.W."/>
            <person name="Venter J.C."/>
        </authorList>
    </citation>
    <scope>NUCLEOTIDE SEQUENCE [LARGE SCALE GENOMIC DNA]</scope>
</reference>
<reference key="4">
    <citation type="journal article" date="2004" name="Genome Res.">
        <title>The status, quality, and expansion of the NIH full-length cDNA project: the Mammalian Gene Collection (MGC).</title>
        <authorList>
            <consortium name="The MGC Project Team"/>
        </authorList>
    </citation>
    <scope>NUCLEOTIDE SEQUENCE [LARGE SCALE MRNA]</scope>
    <scope>VARIANT ILE-247</scope>
    <source>
        <tissue>Choriocarcinoma</tissue>
        <tissue>Kidney</tissue>
        <tissue>Retina</tissue>
    </source>
</reference>
<reference key="5">
    <citation type="journal article" date="2007" name="BMC Genomics">
        <title>The full-ORF clone resource of the German cDNA consortium.</title>
        <authorList>
            <person name="Bechtel S."/>
            <person name="Rosenfelder H."/>
            <person name="Duda A."/>
            <person name="Schmidt C.P."/>
            <person name="Ernst U."/>
            <person name="Wellenreuther R."/>
            <person name="Mehrle A."/>
            <person name="Schuster C."/>
            <person name="Bahr A."/>
            <person name="Bloecker H."/>
            <person name="Heubner D."/>
            <person name="Hoerlein A."/>
            <person name="Michel G."/>
            <person name="Wedler H."/>
            <person name="Koehrer K."/>
            <person name="Ottenwaelder B."/>
            <person name="Poustka A."/>
            <person name="Wiemann S."/>
            <person name="Schupp I."/>
        </authorList>
    </citation>
    <scope>NUCLEOTIDE SEQUENCE [LARGE SCALE MRNA] OF 329-424</scope>
    <source>
        <tissue>Testis</tissue>
    </source>
</reference>
<reference key="6">
    <citation type="journal article" date="1990" name="Biochemistry">
        <title>UDP-GlcNAc transport across the Golgi membrane: electroneutral exchange for dianionic UMP.</title>
        <authorList>
            <person name="Waldman B.C."/>
            <person name="Rudnick G."/>
        </authorList>
    </citation>
    <scope>FUNCTION</scope>
    <scope>TRANSPORTER ACTIVITY</scope>
</reference>
<reference key="7">
    <citation type="journal article" date="2008" name="Proc. Natl. Acad. Sci. U.S.A.">
        <title>A quantitative atlas of mitotic phosphorylation.</title>
        <authorList>
            <person name="Dephoure N."/>
            <person name="Zhou C."/>
            <person name="Villen J."/>
            <person name="Beausoleil S.A."/>
            <person name="Bakalarski C.E."/>
            <person name="Elledge S.J."/>
            <person name="Gygi S.P."/>
        </authorList>
    </citation>
    <scope>PHOSPHORYLATION [LARGE SCALE ANALYSIS] AT SER-416 AND SER-419</scope>
    <scope>IDENTIFICATION BY MASS SPECTROMETRY [LARGE SCALE ANALYSIS]</scope>
    <source>
        <tissue>Cervix carcinoma</tissue>
    </source>
</reference>
<reference key="8">
    <citation type="journal article" date="2013" name="J. Proteome Res.">
        <title>Toward a comprehensive characterization of a human cancer cell phosphoproteome.</title>
        <authorList>
            <person name="Zhou H."/>
            <person name="Di Palma S."/>
            <person name="Preisinger C."/>
            <person name="Peng M."/>
            <person name="Polat A.N."/>
            <person name="Heck A.J."/>
            <person name="Mohammed S."/>
        </authorList>
    </citation>
    <scope>PHOSPHORYLATION [LARGE SCALE ANALYSIS] AT SER-394</scope>
    <scope>IDENTIFICATION BY MASS SPECTROMETRY [LARGE SCALE ANALYSIS]</scope>
    <source>
        <tissue>Erythroleukemia</tissue>
    </source>
</reference>
<reference key="9">
    <citation type="journal article" date="2014" name="J. Proteomics">
        <title>An enzyme assisted RP-RPLC approach for in-depth analysis of human liver phosphoproteome.</title>
        <authorList>
            <person name="Bian Y."/>
            <person name="Song C."/>
            <person name="Cheng K."/>
            <person name="Dong M."/>
            <person name="Wang F."/>
            <person name="Huang J."/>
            <person name="Sun D."/>
            <person name="Wang L."/>
            <person name="Ye M."/>
            <person name="Zou H."/>
        </authorList>
    </citation>
    <scope>PHOSPHORYLATION [LARGE SCALE ANALYSIS] AT SER-394</scope>
    <scope>IDENTIFICATION BY MASS SPECTROMETRY [LARGE SCALE ANALYSIS]</scope>
    <source>
        <tissue>Liver</tissue>
    </source>
</reference>
<reference key="10">
    <citation type="journal article" date="2019" name="Int. J. Mol. Sci.">
        <title>SLC35A5 Protein-A Golgi Complex Member with Putative Nucleotide Sugar Transport Activity.</title>
        <authorList>
            <person name="Sosicka P."/>
            <person name="Bazan B."/>
            <person name="Maszczak-Seneczko D."/>
            <person name="Shauchuk Y."/>
            <person name="Olczak T."/>
            <person name="Olczak M."/>
        </authorList>
    </citation>
    <scope>FUNCTION</scope>
    <scope>TRANSPORTER ACTIVITY</scope>
    <scope>SUBUNIT</scope>
    <scope>SUBCELLULAR LOCATION</scope>
    <scope>TOPOLOGY</scope>
</reference>